<proteinExistence type="inferred from homology"/>
<accession>Q89JA1</accession>
<reference key="1">
    <citation type="journal article" date="2002" name="DNA Res.">
        <title>Complete genomic sequence of nitrogen-fixing symbiotic bacterium Bradyrhizobium japonicum USDA110.</title>
        <authorList>
            <person name="Kaneko T."/>
            <person name="Nakamura Y."/>
            <person name="Sato S."/>
            <person name="Minamisawa K."/>
            <person name="Uchiumi T."/>
            <person name="Sasamoto S."/>
            <person name="Watanabe A."/>
            <person name="Idesawa K."/>
            <person name="Iriguchi M."/>
            <person name="Kawashima K."/>
            <person name="Kohara M."/>
            <person name="Matsumoto M."/>
            <person name="Shimpo S."/>
            <person name="Tsuruoka H."/>
            <person name="Wada T."/>
            <person name="Yamada M."/>
            <person name="Tabata S."/>
        </authorList>
    </citation>
    <scope>NUCLEOTIDE SEQUENCE [LARGE SCALE GENOMIC DNA]</scope>
    <source>
        <strain>JCM 10833 / BCRC 13528 / IAM 13628 / NBRC 14792 / USDA 110</strain>
    </source>
</reference>
<evidence type="ECO:0000255" key="1">
    <source>
        <dbReference type="HAMAP-Rule" id="MF_01307"/>
    </source>
</evidence>
<evidence type="ECO:0000256" key="2">
    <source>
        <dbReference type="SAM" id="MobiDB-lite"/>
    </source>
</evidence>
<evidence type="ECO:0000305" key="3"/>
<gene>
    <name evidence="1" type="primary">rpsE</name>
    <name type="ordered locus">bll5383</name>
</gene>
<protein>
    <recommendedName>
        <fullName evidence="1">Small ribosomal subunit protein uS5</fullName>
    </recommendedName>
    <alternativeName>
        <fullName evidence="3">30S ribosomal protein S5</fullName>
    </alternativeName>
</protein>
<name>RS5_BRADU</name>
<sequence>MAEREQRGGRDQRGGGRERKEREERDSEFVDKLVHINRVAKVVKGGKRFGFAALVVIGDQKGRAGFGHGKAREVPEAIRKATESAKRNLTRVSLREGRTLHHDIAGRHGAGRVYLRAAPAGTGIIAGGPMRAVFETLGVQDVVAKSIGSSNPYNMVRATFDALKHQDSPRSVAARRNIKVSTLQSRRIGGDAEAAAD</sequence>
<keyword id="KW-1185">Reference proteome</keyword>
<keyword id="KW-0687">Ribonucleoprotein</keyword>
<keyword id="KW-0689">Ribosomal protein</keyword>
<keyword id="KW-0694">RNA-binding</keyword>
<keyword id="KW-0699">rRNA-binding</keyword>
<organism>
    <name type="scientific">Bradyrhizobium diazoefficiens (strain JCM 10833 / BCRC 13528 / IAM 13628 / NBRC 14792 / USDA 110)</name>
    <dbReference type="NCBI Taxonomy" id="224911"/>
    <lineage>
        <taxon>Bacteria</taxon>
        <taxon>Pseudomonadati</taxon>
        <taxon>Pseudomonadota</taxon>
        <taxon>Alphaproteobacteria</taxon>
        <taxon>Hyphomicrobiales</taxon>
        <taxon>Nitrobacteraceae</taxon>
        <taxon>Bradyrhizobium</taxon>
    </lineage>
</organism>
<feature type="chain" id="PRO_0000131481" description="Small ribosomal subunit protein uS5">
    <location>
        <begin position="1"/>
        <end position="197"/>
    </location>
</feature>
<feature type="domain" description="S5 DRBM" evidence="1">
    <location>
        <begin position="29"/>
        <end position="92"/>
    </location>
</feature>
<feature type="region of interest" description="Disordered" evidence="2">
    <location>
        <begin position="1"/>
        <end position="27"/>
    </location>
</feature>
<dbReference type="EMBL" id="BA000040">
    <property type="protein sequence ID" value="BAC50648.1"/>
    <property type="molecule type" value="Genomic_DNA"/>
</dbReference>
<dbReference type="RefSeq" id="NP_772023.1">
    <property type="nucleotide sequence ID" value="NC_004463.1"/>
</dbReference>
<dbReference type="RefSeq" id="WP_008136332.1">
    <property type="nucleotide sequence ID" value="NZ_CP011360.1"/>
</dbReference>
<dbReference type="SMR" id="Q89JA1"/>
<dbReference type="FunCoup" id="Q89JA1">
    <property type="interactions" value="952"/>
</dbReference>
<dbReference type="STRING" id="224911.AAV28_24325"/>
<dbReference type="EnsemblBacteria" id="BAC50648">
    <property type="protein sequence ID" value="BAC50648"/>
    <property type="gene ID" value="BAC50648"/>
</dbReference>
<dbReference type="GeneID" id="46492381"/>
<dbReference type="KEGG" id="bja:bll5383"/>
<dbReference type="PATRIC" id="fig|224911.44.peg.5282"/>
<dbReference type="eggNOG" id="COG0098">
    <property type="taxonomic scope" value="Bacteria"/>
</dbReference>
<dbReference type="HOGENOM" id="CLU_065898_2_2_5"/>
<dbReference type="InParanoid" id="Q89JA1"/>
<dbReference type="OrthoDB" id="9809045at2"/>
<dbReference type="PhylomeDB" id="Q89JA1"/>
<dbReference type="PRO" id="PR:Q89JA1"/>
<dbReference type="Proteomes" id="UP000002526">
    <property type="component" value="Chromosome"/>
</dbReference>
<dbReference type="GO" id="GO:0022627">
    <property type="term" value="C:cytosolic small ribosomal subunit"/>
    <property type="evidence" value="ECO:0000318"/>
    <property type="project" value="GO_Central"/>
</dbReference>
<dbReference type="GO" id="GO:0019843">
    <property type="term" value="F:rRNA binding"/>
    <property type="evidence" value="ECO:0007669"/>
    <property type="project" value="UniProtKB-UniRule"/>
</dbReference>
<dbReference type="GO" id="GO:0003735">
    <property type="term" value="F:structural constituent of ribosome"/>
    <property type="evidence" value="ECO:0000318"/>
    <property type="project" value="GO_Central"/>
</dbReference>
<dbReference type="GO" id="GO:0006412">
    <property type="term" value="P:translation"/>
    <property type="evidence" value="ECO:0000318"/>
    <property type="project" value="GO_Central"/>
</dbReference>
<dbReference type="FunFam" id="3.30.160.20:FF:000001">
    <property type="entry name" value="30S ribosomal protein S5"/>
    <property type="match status" value="1"/>
</dbReference>
<dbReference type="FunFam" id="3.30.230.10:FF:000002">
    <property type="entry name" value="30S ribosomal protein S5"/>
    <property type="match status" value="1"/>
</dbReference>
<dbReference type="Gene3D" id="3.30.160.20">
    <property type="match status" value="1"/>
</dbReference>
<dbReference type="Gene3D" id="3.30.230.10">
    <property type="match status" value="1"/>
</dbReference>
<dbReference type="HAMAP" id="MF_01307_B">
    <property type="entry name" value="Ribosomal_uS5_B"/>
    <property type="match status" value="1"/>
</dbReference>
<dbReference type="InterPro" id="IPR020568">
    <property type="entry name" value="Ribosomal_Su5_D2-typ_SF"/>
</dbReference>
<dbReference type="InterPro" id="IPR000851">
    <property type="entry name" value="Ribosomal_uS5"/>
</dbReference>
<dbReference type="InterPro" id="IPR005712">
    <property type="entry name" value="Ribosomal_uS5_bac-type"/>
</dbReference>
<dbReference type="InterPro" id="IPR005324">
    <property type="entry name" value="Ribosomal_uS5_C"/>
</dbReference>
<dbReference type="InterPro" id="IPR013810">
    <property type="entry name" value="Ribosomal_uS5_N"/>
</dbReference>
<dbReference type="InterPro" id="IPR018192">
    <property type="entry name" value="Ribosomal_uS5_N_CS"/>
</dbReference>
<dbReference type="InterPro" id="IPR014721">
    <property type="entry name" value="Ribsml_uS5_D2-typ_fold_subgr"/>
</dbReference>
<dbReference type="NCBIfam" id="TIGR01021">
    <property type="entry name" value="rpsE_bact"/>
    <property type="match status" value="1"/>
</dbReference>
<dbReference type="PANTHER" id="PTHR48277">
    <property type="entry name" value="MITOCHONDRIAL RIBOSOMAL PROTEIN S5"/>
    <property type="match status" value="1"/>
</dbReference>
<dbReference type="PANTHER" id="PTHR48277:SF1">
    <property type="entry name" value="MITOCHONDRIAL RIBOSOMAL PROTEIN S5"/>
    <property type="match status" value="1"/>
</dbReference>
<dbReference type="Pfam" id="PF00333">
    <property type="entry name" value="Ribosomal_S5"/>
    <property type="match status" value="1"/>
</dbReference>
<dbReference type="Pfam" id="PF03719">
    <property type="entry name" value="Ribosomal_S5_C"/>
    <property type="match status" value="1"/>
</dbReference>
<dbReference type="SUPFAM" id="SSF54768">
    <property type="entry name" value="dsRNA-binding domain-like"/>
    <property type="match status" value="1"/>
</dbReference>
<dbReference type="SUPFAM" id="SSF54211">
    <property type="entry name" value="Ribosomal protein S5 domain 2-like"/>
    <property type="match status" value="1"/>
</dbReference>
<dbReference type="PROSITE" id="PS00585">
    <property type="entry name" value="RIBOSOMAL_S5"/>
    <property type="match status" value="1"/>
</dbReference>
<dbReference type="PROSITE" id="PS50881">
    <property type="entry name" value="S5_DSRBD"/>
    <property type="match status" value="1"/>
</dbReference>
<comment type="function">
    <text evidence="1">With S4 and S12 plays an important role in translational accuracy.</text>
</comment>
<comment type="function">
    <text evidence="1">Located at the back of the 30S subunit body where it stabilizes the conformation of the head with respect to the body.</text>
</comment>
<comment type="subunit">
    <text evidence="1">Part of the 30S ribosomal subunit. Contacts proteins S4 and S8.</text>
</comment>
<comment type="domain">
    <text>The N-terminal domain interacts with the head of the 30S subunit; the C-terminal domain interacts with the body and contacts protein S4. The interaction surface between S4 and S5 is involved in control of translational fidelity.</text>
</comment>
<comment type="similarity">
    <text evidence="1">Belongs to the universal ribosomal protein uS5 family.</text>
</comment>